<feature type="transit peptide" description="Peroxisome" evidence="8">
    <location>
        <begin position="1"/>
        <end position="58"/>
    </location>
</feature>
<feature type="chain" id="PRO_0000020430" description="Alkyldihydroxyacetonephosphate synthase, peroxisomal">
    <location>
        <begin position="59"/>
        <end position="658"/>
    </location>
</feature>
<feature type="domain" description="FAD-binding PCMH-type" evidence="3">
    <location>
        <begin position="202"/>
        <end position="384"/>
    </location>
</feature>
<feature type="region of interest" description="Disordered" evidence="4">
    <location>
        <begin position="1"/>
        <end position="37"/>
    </location>
</feature>
<feature type="region of interest" description="Important for enzyme activity" evidence="5 9">
    <location>
        <begin position="615"/>
        <end position="617"/>
    </location>
</feature>
<feature type="region of interest" description="Important for enzyme activity" evidence="9">
    <location>
        <begin position="654"/>
        <end position="658"/>
    </location>
</feature>
<feature type="compositionally biased region" description="Low complexity" evidence="4">
    <location>
        <begin position="1"/>
        <end position="24"/>
    </location>
</feature>
<feature type="compositionally biased region" description="Basic and acidic residues" evidence="4">
    <location>
        <begin position="25"/>
        <end position="35"/>
    </location>
</feature>
<feature type="active site" description="Proton donor/acceptor" evidence="6">
    <location>
        <position position="578"/>
    </location>
</feature>
<feature type="binding site" evidence="6">
    <location>
        <begin position="234"/>
        <end position="240"/>
    </location>
    <ligand>
        <name>FAD</name>
        <dbReference type="ChEBI" id="CHEBI:57692"/>
    </ligand>
</feature>
<feature type="binding site" evidence="6">
    <location>
        <begin position="303"/>
        <end position="309"/>
    </location>
    <ligand>
        <name>FAD</name>
        <dbReference type="ChEBI" id="CHEBI:57692"/>
    </ligand>
</feature>
<feature type="binding site" evidence="6">
    <location>
        <begin position="316"/>
        <end position="319"/>
    </location>
    <ligand>
        <name>FAD</name>
        <dbReference type="ChEBI" id="CHEBI:57692"/>
    </ligand>
</feature>
<feature type="binding site" evidence="6">
    <location>
        <begin position="368"/>
        <end position="374"/>
    </location>
    <ligand>
        <name>FAD</name>
        <dbReference type="ChEBI" id="CHEBI:57692"/>
    </ligand>
</feature>
<feature type="binding site" evidence="6">
    <location>
        <position position="515"/>
    </location>
    <ligand>
        <name>substrate</name>
    </ligand>
</feature>
<feature type="site" description="Important for enzyme activity" evidence="5 6">
    <location>
        <position position="419"/>
    </location>
</feature>
<feature type="modified residue" description="Phosphoserine" evidence="1">
    <location>
        <position position="65"/>
    </location>
</feature>
<feature type="modified residue" description="Phosphothreonine" evidence="1">
    <location>
        <position position="74"/>
    </location>
</feature>
<feature type="modified residue" description="N6-acetyllysine" evidence="1">
    <location>
        <position position="102"/>
    </location>
</feature>
<feature type="modified residue" description="N6-acetyllysine" evidence="1">
    <location>
        <position position="347"/>
    </location>
</feature>
<feature type="mutagenesis site" description="Loss of activity." evidence="5">
    <original>H</original>
    <variation>A</variation>
    <location>
        <position position="300"/>
    </location>
</feature>
<feature type="mutagenesis site" description="Impaired FAD binding and protein stability. Loss of activity." evidence="6">
    <original>T</original>
    <variation>I</variation>
    <location>
        <position position="309"/>
    </location>
</feature>
<feature type="mutagenesis site" description="Strongly reduced activity." evidence="5 9">
    <original>S</original>
    <variation>A</variation>
    <location>
        <position position="367"/>
    </location>
</feature>
<feature type="mutagenesis site" description="Loss of activity." evidence="5 6">
    <original>R</original>
    <variation>H</variation>
    <location>
        <position position="419"/>
    </location>
</feature>
<feature type="mutagenesis site" description="Strongly reduced activity." evidence="5 6 9">
    <original>R</original>
    <variation>K</variation>
    <location>
        <position position="419"/>
    </location>
</feature>
<feature type="mutagenesis site" description="Impaired FAD binding and protein stability. Loss of activity." evidence="6">
    <original>L</original>
    <variation>P</variation>
    <location>
        <position position="469"/>
    </location>
</feature>
<feature type="mutagenesis site" description="Impaired FAD binding and protein stability. Loss of activity." evidence="6">
    <original>R</original>
    <variation>L</variation>
    <location>
        <position position="515"/>
    </location>
</feature>
<feature type="mutagenesis site" description="No effect on activity." evidence="9">
    <original>C</original>
    <variation>A</variation>
    <location>
        <position position="576"/>
    </location>
</feature>
<feature type="mutagenesis site" description="Loss of activity." evidence="6">
    <original>Y</original>
    <variation>F</variation>
    <location>
        <position position="578"/>
    </location>
</feature>
<feature type="mutagenesis site" description="Loss of activity." evidence="5">
    <original>H</original>
    <variation>A</variation>
    <location>
        <position position="615"/>
    </location>
</feature>
<feature type="mutagenesis site" description="Loss of activity." evidence="5">
    <original>H</original>
    <variation>A</variation>
    <location>
        <position position="616"/>
    </location>
</feature>
<feature type="mutagenesis site" description="Loss of activity." evidence="5 9">
    <original>H</original>
    <variation>A</variation>
    <location>
        <position position="617"/>
    </location>
</feature>
<feature type="helix" evidence="15">
    <location>
        <begin position="87"/>
        <end position="89"/>
    </location>
</feature>
<feature type="strand" evidence="15">
    <location>
        <begin position="95"/>
        <end position="98"/>
    </location>
</feature>
<feature type="strand" evidence="15">
    <location>
        <begin position="103"/>
        <end position="105"/>
    </location>
</feature>
<feature type="strand" evidence="15">
    <location>
        <begin position="111"/>
        <end position="113"/>
    </location>
</feature>
<feature type="strand" evidence="15">
    <location>
        <begin position="115"/>
        <end position="118"/>
    </location>
</feature>
<feature type="turn" evidence="16">
    <location>
        <begin position="119"/>
        <end position="122"/>
    </location>
</feature>
<feature type="helix" evidence="15">
    <location>
        <begin position="128"/>
        <end position="136"/>
    </location>
</feature>
<feature type="strand" evidence="20">
    <location>
        <begin position="140"/>
        <end position="142"/>
    </location>
</feature>
<feature type="helix" evidence="19">
    <location>
        <begin position="152"/>
        <end position="154"/>
    </location>
</feature>
<feature type="helix" evidence="15">
    <location>
        <begin position="162"/>
        <end position="171"/>
    </location>
</feature>
<feature type="strand" evidence="15">
    <location>
        <begin position="174"/>
        <end position="176"/>
    </location>
</feature>
<feature type="helix" evidence="15">
    <location>
        <begin position="179"/>
        <end position="184"/>
    </location>
</feature>
<feature type="helix" evidence="15">
    <location>
        <begin position="191"/>
        <end position="198"/>
    </location>
</feature>
<feature type="strand" evidence="15">
    <location>
        <begin position="207"/>
        <end position="211"/>
    </location>
</feature>
<feature type="helix" evidence="15">
    <location>
        <begin position="215"/>
        <end position="227"/>
    </location>
</feature>
<feature type="strand" evidence="15">
    <location>
        <begin position="231"/>
        <end position="237"/>
    </location>
</feature>
<feature type="strand" evidence="15">
    <location>
        <begin position="241"/>
        <end position="243"/>
    </location>
</feature>
<feature type="strand" evidence="15">
    <location>
        <begin position="255"/>
        <end position="259"/>
    </location>
</feature>
<feature type="strand" evidence="15">
    <location>
        <begin position="266"/>
        <end position="270"/>
    </location>
</feature>
<feature type="turn" evidence="15">
    <location>
        <begin position="271"/>
        <end position="274"/>
    </location>
</feature>
<feature type="strand" evidence="15">
    <location>
        <begin position="275"/>
        <end position="279"/>
    </location>
</feature>
<feature type="helix" evidence="15">
    <location>
        <begin position="284"/>
        <end position="293"/>
    </location>
</feature>
<feature type="turn" evidence="15">
    <location>
        <begin position="303"/>
        <end position="307"/>
    </location>
</feature>
<feature type="helix" evidence="15">
    <location>
        <begin position="310"/>
        <end position="316"/>
    </location>
</feature>
<feature type="helix" evidence="15">
    <location>
        <begin position="323"/>
        <end position="326"/>
    </location>
</feature>
<feature type="helix" evidence="15">
    <location>
        <begin position="329"/>
        <end position="332"/>
    </location>
</feature>
<feature type="strand" evidence="15">
    <location>
        <begin position="333"/>
        <end position="340"/>
    </location>
</feature>
<feature type="strand" evidence="15">
    <location>
        <begin position="343"/>
        <end position="346"/>
    </location>
</feature>
<feature type="strand" evidence="15">
    <location>
        <begin position="356"/>
        <end position="358"/>
    </location>
</feature>
<feature type="helix" evidence="15">
    <location>
        <begin position="361"/>
        <end position="364"/>
    </location>
</feature>
<feature type="strand" evidence="15">
    <location>
        <begin position="373"/>
        <end position="380"/>
    </location>
</feature>
<feature type="strand" evidence="15">
    <location>
        <begin position="386"/>
        <end position="397"/>
    </location>
</feature>
<feature type="helix" evidence="15">
    <location>
        <begin position="398"/>
        <end position="410"/>
    </location>
</feature>
<feature type="strand" evidence="15">
    <location>
        <begin position="416"/>
        <end position="421"/>
    </location>
</feature>
<feature type="helix" evidence="15">
    <location>
        <begin position="423"/>
        <end position="431"/>
    </location>
</feature>
<feature type="strand" evidence="17">
    <location>
        <begin position="432"/>
        <end position="434"/>
    </location>
</feature>
<feature type="helix" evidence="20">
    <location>
        <begin position="444"/>
        <end position="449"/>
    </location>
</feature>
<feature type="turn" evidence="18">
    <location>
        <begin position="451"/>
        <end position="457"/>
    </location>
</feature>
<feature type="turn" evidence="15">
    <location>
        <begin position="460"/>
        <end position="462"/>
    </location>
</feature>
<feature type="strand" evidence="15">
    <location>
        <begin position="464"/>
        <end position="472"/>
    </location>
</feature>
<feature type="helix" evidence="15">
    <location>
        <begin position="474"/>
        <end position="489"/>
    </location>
</feature>
<feature type="turn" evidence="15">
    <location>
        <begin position="490"/>
        <end position="492"/>
    </location>
</feature>
<feature type="helix" evidence="15">
    <location>
        <begin position="498"/>
        <end position="520"/>
    </location>
</feature>
<feature type="strand" evidence="15">
    <location>
        <begin position="523"/>
        <end position="533"/>
    </location>
</feature>
<feature type="helix" evidence="15">
    <location>
        <begin position="534"/>
        <end position="536"/>
    </location>
</feature>
<feature type="helix" evidence="15">
    <location>
        <begin position="537"/>
        <end position="554"/>
    </location>
</feature>
<feature type="strand" evidence="15">
    <location>
        <begin position="562"/>
        <end position="570"/>
    </location>
</feature>
<feature type="strand" evidence="15">
    <location>
        <begin position="572"/>
        <end position="584"/>
    </location>
</feature>
<feature type="helix" evidence="15">
    <location>
        <begin position="591"/>
        <end position="608"/>
    </location>
</feature>
<feature type="strand" evidence="15">
    <location>
        <begin position="615"/>
        <end position="617"/>
    </location>
</feature>
<feature type="turn" evidence="15">
    <location>
        <begin position="620"/>
        <end position="622"/>
    </location>
</feature>
<feature type="helix" evidence="15">
    <location>
        <begin position="624"/>
        <end position="626"/>
    </location>
</feature>
<feature type="helix" evidence="15">
    <location>
        <begin position="627"/>
        <end position="631"/>
    </location>
</feature>
<feature type="helix" evidence="15">
    <location>
        <begin position="633"/>
        <end position="646"/>
    </location>
</feature>
<organism>
    <name type="scientific">Cavia porcellus</name>
    <name type="common">Guinea pig</name>
    <dbReference type="NCBI Taxonomy" id="10141"/>
    <lineage>
        <taxon>Eukaryota</taxon>
        <taxon>Metazoa</taxon>
        <taxon>Chordata</taxon>
        <taxon>Craniata</taxon>
        <taxon>Vertebrata</taxon>
        <taxon>Euteleostomi</taxon>
        <taxon>Mammalia</taxon>
        <taxon>Eutheria</taxon>
        <taxon>Euarchontoglires</taxon>
        <taxon>Glires</taxon>
        <taxon>Rodentia</taxon>
        <taxon>Hystricomorpha</taxon>
        <taxon>Caviidae</taxon>
        <taxon>Cavia</taxon>
    </lineage>
</organism>
<proteinExistence type="evidence at protein level"/>
<name>ADAS_CAVPO</name>
<keyword id="KW-0002">3D-structure</keyword>
<keyword id="KW-0007">Acetylation</keyword>
<keyword id="KW-0903">Direct protein sequencing</keyword>
<keyword id="KW-0274">FAD</keyword>
<keyword id="KW-0285">Flavoprotein</keyword>
<keyword id="KW-0444">Lipid biosynthesis</keyword>
<keyword id="KW-0443">Lipid metabolism</keyword>
<keyword id="KW-0472">Membrane</keyword>
<keyword id="KW-0576">Peroxisome</keyword>
<keyword id="KW-0597">Phosphoprotein</keyword>
<keyword id="KW-1185">Reference proteome</keyword>
<keyword id="KW-0808">Transferase</keyword>
<keyword id="KW-0809">Transit peptide</keyword>
<accession>P97275</accession>
<dbReference type="EC" id="2.5.1.26" evidence="5 6 7 9"/>
<dbReference type="EMBL" id="Y08826">
    <property type="protein sequence ID" value="CAA70060.1"/>
    <property type="molecule type" value="mRNA"/>
</dbReference>
<dbReference type="RefSeq" id="XP_005007711.2">
    <property type="nucleotide sequence ID" value="XM_005007654.2"/>
</dbReference>
<dbReference type="PDB" id="4BBY">
    <property type="method" value="X-ray"/>
    <property type="resolution" value="1.90 A"/>
    <property type="chains" value="A/B/C/D=1-658"/>
</dbReference>
<dbReference type="PDB" id="4BC7">
    <property type="method" value="X-ray"/>
    <property type="resolution" value="2.40 A"/>
    <property type="chains" value="A/B/C/D=1-658"/>
</dbReference>
<dbReference type="PDB" id="4BC9">
    <property type="method" value="X-ray"/>
    <property type="resolution" value="2.41 A"/>
    <property type="chains" value="A/B/C/D=1-658"/>
</dbReference>
<dbReference type="PDB" id="4BCA">
    <property type="method" value="X-ray"/>
    <property type="resolution" value="2.40 A"/>
    <property type="chains" value="A/B/C/D=1-658"/>
</dbReference>
<dbReference type="PDB" id="5ADZ">
    <property type="method" value="X-ray"/>
    <property type="resolution" value="2.20 A"/>
    <property type="chains" value="A/B/C/D=1-658"/>
</dbReference>
<dbReference type="PDB" id="5AE1">
    <property type="method" value="X-ray"/>
    <property type="resolution" value="2.10 A"/>
    <property type="chains" value="A/B/C/D=1-658"/>
</dbReference>
<dbReference type="PDB" id="5AE2">
    <property type="method" value="X-ray"/>
    <property type="resolution" value="2.00 A"/>
    <property type="chains" value="A/B/C/D=1-658"/>
</dbReference>
<dbReference type="PDB" id="5AE3">
    <property type="method" value="X-ray"/>
    <property type="resolution" value="2.18 A"/>
    <property type="chains" value="A/B/C/D=1-658"/>
</dbReference>
<dbReference type="PDB" id="6GOU">
    <property type="method" value="X-ray"/>
    <property type="resolution" value="2.90 A"/>
    <property type="chains" value="A/B/C/D=1-658"/>
</dbReference>
<dbReference type="PDBsum" id="4BBY"/>
<dbReference type="PDBsum" id="4BC7"/>
<dbReference type="PDBsum" id="4BC9"/>
<dbReference type="PDBsum" id="4BCA"/>
<dbReference type="PDBsum" id="5ADZ"/>
<dbReference type="PDBsum" id="5AE1"/>
<dbReference type="PDBsum" id="5AE2"/>
<dbReference type="PDBsum" id="5AE3"/>
<dbReference type="PDBsum" id="6GOU"/>
<dbReference type="SMR" id="P97275"/>
<dbReference type="FunCoup" id="P97275">
    <property type="interactions" value="2607"/>
</dbReference>
<dbReference type="STRING" id="10141.ENSCPOP00000000601"/>
<dbReference type="SwissLipids" id="SLP:000000212"/>
<dbReference type="Ensembl" id="ENSCPOT00000000684.3">
    <property type="protein sequence ID" value="ENSCPOP00000000601.2"/>
    <property type="gene ID" value="ENSCPOG00000000679.4"/>
</dbReference>
<dbReference type="GeneID" id="100734021"/>
<dbReference type="KEGG" id="cpoc:100734021"/>
<dbReference type="CTD" id="8540"/>
<dbReference type="VEuPathDB" id="HostDB:ENSCPOG00000000679"/>
<dbReference type="eggNOG" id="KOG1233">
    <property type="taxonomic scope" value="Eukaryota"/>
</dbReference>
<dbReference type="GeneTree" id="ENSGT00940000156112"/>
<dbReference type="HOGENOM" id="CLU_017779_2_2_1"/>
<dbReference type="InParanoid" id="P97275"/>
<dbReference type="OMA" id="GTISHQH"/>
<dbReference type="OrthoDB" id="7786253at2759"/>
<dbReference type="TreeFam" id="TF313830"/>
<dbReference type="BRENDA" id="2.5.1.26">
    <property type="organism ID" value="1225"/>
</dbReference>
<dbReference type="SABIO-RK" id="P97275"/>
<dbReference type="UniPathway" id="UPA00781"/>
<dbReference type="EvolutionaryTrace" id="P97275"/>
<dbReference type="Proteomes" id="UP000005447">
    <property type="component" value="Unassembled WGS sequence"/>
</dbReference>
<dbReference type="Bgee" id="ENSCPOG00000000679">
    <property type="expression patterns" value="Expressed in uterine cervix and 12 other cell types or tissues"/>
</dbReference>
<dbReference type="GO" id="GO:0005778">
    <property type="term" value="C:peroxisomal membrane"/>
    <property type="evidence" value="ECO:0000314"/>
    <property type="project" value="UniProtKB"/>
</dbReference>
<dbReference type="GO" id="GO:0005777">
    <property type="term" value="C:peroxisome"/>
    <property type="evidence" value="ECO:0000314"/>
    <property type="project" value="UniProtKB"/>
</dbReference>
<dbReference type="GO" id="GO:0008609">
    <property type="term" value="F:alkylglycerone-phosphate synthase activity"/>
    <property type="evidence" value="ECO:0000314"/>
    <property type="project" value="UniProtKB"/>
</dbReference>
<dbReference type="GO" id="GO:0071949">
    <property type="term" value="F:FAD binding"/>
    <property type="evidence" value="ECO:0000314"/>
    <property type="project" value="UniProtKB"/>
</dbReference>
<dbReference type="GO" id="GO:0008611">
    <property type="term" value="P:ether lipid biosynthetic process"/>
    <property type="evidence" value="ECO:0000314"/>
    <property type="project" value="UniProtKB"/>
</dbReference>
<dbReference type="FunFam" id="1.10.45.10:FF:000002">
    <property type="entry name" value="Alkylglycerone-phosphate synthase"/>
    <property type="match status" value="1"/>
</dbReference>
<dbReference type="FunFam" id="3.30.300.330:FF:000001">
    <property type="entry name" value="Alkylglycerone-phosphate synthase"/>
    <property type="match status" value="1"/>
</dbReference>
<dbReference type="FunFam" id="3.30.43.10:FF:000003">
    <property type="entry name" value="Alkylglycerone-phosphate synthase"/>
    <property type="match status" value="1"/>
</dbReference>
<dbReference type="FunFam" id="3.30.465.10:FF:000011">
    <property type="entry name" value="Alkylglycerone-phosphate synthase"/>
    <property type="match status" value="1"/>
</dbReference>
<dbReference type="FunFam" id="3.30.70.3450:FF:000001">
    <property type="entry name" value="Alkylglycerone-phosphate synthase"/>
    <property type="match status" value="1"/>
</dbReference>
<dbReference type="Gene3D" id="3.30.160.650">
    <property type="match status" value="1"/>
</dbReference>
<dbReference type="Gene3D" id="3.30.300.330">
    <property type="match status" value="1"/>
</dbReference>
<dbReference type="Gene3D" id="3.30.465.10">
    <property type="match status" value="1"/>
</dbReference>
<dbReference type="Gene3D" id="3.30.70.3450">
    <property type="match status" value="1"/>
</dbReference>
<dbReference type="Gene3D" id="3.30.43.10">
    <property type="entry name" value="Uridine Diphospho-n-acetylenolpyruvylglucosamine Reductase, domain 2"/>
    <property type="match status" value="1"/>
</dbReference>
<dbReference type="Gene3D" id="1.10.45.10">
    <property type="entry name" value="Vanillyl-alcohol Oxidase, Chain A, domain 4"/>
    <property type="match status" value="1"/>
</dbReference>
<dbReference type="InterPro" id="IPR025650">
    <property type="entry name" value="Alkyl-DHAP_Synthase"/>
</dbReference>
<dbReference type="InterPro" id="IPR004113">
    <property type="entry name" value="FAD-bd_oxidored_4_C"/>
</dbReference>
<dbReference type="InterPro" id="IPR016166">
    <property type="entry name" value="FAD-bd_PCMH"/>
</dbReference>
<dbReference type="InterPro" id="IPR036318">
    <property type="entry name" value="FAD-bd_PCMH-like_sf"/>
</dbReference>
<dbReference type="InterPro" id="IPR016167">
    <property type="entry name" value="FAD-bd_PCMH_sub1"/>
</dbReference>
<dbReference type="InterPro" id="IPR016169">
    <property type="entry name" value="FAD-bd_PCMH_sub2"/>
</dbReference>
<dbReference type="InterPro" id="IPR016164">
    <property type="entry name" value="FAD-linked_Oxase-like_C"/>
</dbReference>
<dbReference type="InterPro" id="IPR006094">
    <property type="entry name" value="Oxid_FAD_bind_N"/>
</dbReference>
<dbReference type="InterPro" id="IPR016171">
    <property type="entry name" value="Vanillyl_alc_oxidase_C-sub2"/>
</dbReference>
<dbReference type="PANTHER" id="PTHR46568">
    <property type="entry name" value="ALKYLDIHYDROXYACETONEPHOSPHATE SYNTHASE, PEROXISOMAL"/>
    <property type="match status" value="1"/>
</dbReference>
<dbReference type="PANTHER" id="PTHR46568:SF1">
    <property type="entry name" value="ALKYLDIHYDROXYACETONEPHOSPHATE SYNTHASE, PEROXISOMAL"/>
    <property type="match status" value="1"/>
</dbReference>
<dbReference type="Pfam" id="PF02913">
    <property type="entry name" value="FAD-oxidase_C"/>
    <property type="match status" value="1"/>
</dbReference>
<dbReference type="Pfam" id="PF01565">
    <property type="entry name" value="FAD_binding_4"/>
    <property type="match status" value="1"/>
</dbReference>
<dbReference type="SUPFAM" id="SSF56176">
    <property type="entry name" value="FAD-binding/transporter-associated domain-like"/>
    <property type="match status" value="1"/>
</dbReference>
<dbReference type="SUPFAM" id="SSF55103">
    <property type="entry name" value="FAD-linked oxidases, C-terminal domain"/>
    <property type="match status" value="1"/>
</dbReference>
<dbReference type="PROSITE" id="PS51387">
    <property type="entry name" value="FAD_PCMH"/>
    <property type="match status" value="1"/>
</dbReference>
<comment type="function">
    <text evidence="5 6 7 9">Catalyzes the exchange of the acyl chain in acyl-dihydroxyacetonephosphate (acyl-DHAP) for a long chain fatty alcohol, yielding the first ether linked intermediate, i.e. alkyl-dihydroxyacetonephosphate (alkyl-DHAP), in the pathway of ether lipid biosynthesis.</text>
</comment>
<comment type="catalytic activity">
    <reaction evidence="5 6 7 9">
        <text>a long chain fatty alcohol + a 1-acylglycerone 3-phosphate = a 1-O-alkylglycerone 3-phosphate + a long-chain fatty acid + H(+)</text>
        <dbReference type="Rhea" id="RHEA:36171"/>
        <dbReference type="ChEBI" id="CHEBI:15378"/>
        <dbReference type="ChEBI" id="CHEBI:17135"/>
        <dbReference type="ChEBI" id="CHEBI:57534"/>
        <dbReference type="ChEBI" id="CHEBI:57560"/>
        <dbReference type="ChEBI" id="CHEBI:73315"/>
        <dbReference type="EC" id="2.5.1.26"/>
    </reaction>
    <physiologicalReaction direction="left-to-right" evidence="11 12 13 14">
        <dbReference type="Rhea" id="RHEA:36172"/>
    </physiologicalReaction>
</comment>
<comment type="catalytic activity">
    <reaction evidence="5 7 9">
        <text>hexadecan-1-ol + 1-hexadecanoylglycerone 3-phosphate = 1-O-hexadecylglycerone 3-phosphate + hexadecanoate + H(+)</text>
        <dbReference type="Rhea" id="RHEA:40659"/>
        <dbReference type="ChEBI" id="CHEBI:7896"/>
        <dbReference type="ChEBI" id="CHEBI:15378"/>
        <dbReference type="ChEBI" id="CHEBI:16125"/>
        <dbReference type="ChEBI" id="CHEBI:58303"/>
        <dbReference type="ChEBI" id="CHEBI:77429"/>
    </reaction>
    <physiologicalReaction direction="left-to-right" evidence="11 13 14">
        <dbReference type="Rhea" id="RHEA:40660"/>
    </physiologicalReaction>
</comment>
<comment type="catalytic activity">
    <reaction evidence="2">
        <text>1-hexadecanoylglycerone 3-phosphate + a long-chain fatty acid = a 1-acylglycerone 3-phosphate + hexadecanoate</text>
        <dbReference type="Rhea" id="RHEA:40727"/>
        <dbReference type="ChEBI" id="CHEBI:7896"/>
        <dbReference type="ChEBI" id="CHEBI:57534"/>
        <dbReference type="ChEBI" id="CHEBI:57560"/>
        <dbReference type="ChEBI" id="CHEBI:58303"/>
    </reaction>
    <physiologicalReaction direction="left-to-right" evidence="2">
        <dbReference type="Rhea" id="RHEA:40728"/>
    </physiologicalReaction>
</comment>
<comment type="cofactor">
    <cofactor evidence="5 6">
        <name>FAD</name>
        <dbReference type="ChEBI" id="CHEBI:57692"/>
    </cofactor>
</comment>
<comment type="activity regulation">
    <text evidence="9">Inhibited by N-ethylmaleimide, p-bromophenacylbromide, 2,4- dinitrofluorobenzene and divalent cations such as such as Mn(2+), Mg(2+) and Zn(2+) (PubMed:9989261). Inhibition by p-bromophenacylbromide is strongly pH dependent and is highest at alkaline conditions (PubMed:9989261).</text>
</comment>
<comment type="biophysicochemical properties">
    <kinetics>
        <KM evidence="7">68 uM for palmitoyl-dihydroxyacetonephosphate (in the presence of 0.5 mM of hexadecanol)</KM>
        <KM evidence="7">72 uM for hexadecanol (in the presence of 0.3 mM of palmitoyl- dihydroxyacetonephosphate)</KM>
        <KM evidence="7">192 uM for hexadecyl-dihydroxyacetonephosphate (in the presence of 0.05 mM of hexadecanol)</KM>
        <KM evidence="7">115 uM for hexadecyl-dihydroxyacetonephosphate (in the presence of 0.4 mM of hexadecanol)</KM>
        <KM evidence="7">100 uM for hexadecanol (in the presence of 0.4 mM of hexadecyl-dihydroxyacetonephosphate)</KM>
        <Vmax evidence="7">42.0 nmol/min/mg enzyme toward palmitoyl-dihydroxyacetonephosphate (in the presence of 0.5 mM of hexadecanol)</Vmax>
        <Vmax evidence="7">50.0 nmol/min/mg enzyme toward hexadecanol (in the presence of 0.3 mM of palmitoyl-dihydroxyacetonephosphate)</Vmax>
        <Vmax evidence="7">8.0 nmol/min/mg enzyme toward hexadecyl-dihydroxyacetonephosphate (in the presence of 0.05 mM of hexadecanol)</Vmax>
        <Vmax evidence="7">7.0 nmol/min/mg enzyme toward hexadecyl-dihydroxyacetonephosphate (in the presence of 0.4 mM of hexadecanol)</Vmax>
        <Vmax evidence="7">7.0 nmol/min/mg enzyme toward hexadecanal (in the presence of 0.4 mM of hexadecyl-dihydroxyacetonephosphate)</Vmax>
    </kinetics>
    <phDependence>
        <text evidence="7">Optimum pH is 7-8.</text>
    </phDependence>
</comment>
<comment type="pathway">
    <text>Glycerolipid metabolism; ether lipid biosynthesis.</text>
</comment>
<comment type="subunit">
    <text evidence="6">Homodimer.</text>
</comment>
<comment type="subcellular location">
    <subcellularLocation>
        <location evidence="7">Peroxisome membrane</location>
    </subcellularLocation>
    <subcellularLocation>
        <location evidence="9">Peroxisome</location>
    </subcellularLocation>
</comment>
<comment type="similarity">
    <text evidence="10">Belongs to the FAD-binding oxidoreductase/transferase type 4 family.</text>
</comment>
<evidence type="ECO:0000250" key="1">
    <source>
        <dbReference type="UniProtKB" id="O00116"/>
    </source>
</evidence>
<evidence type="ECO:0000250" key="2">
    <source>
        <dbReference type="UniProtKB" id="Q8C0I1"/>
    </source>
</evidence>
<evidence type="ECO:0000255" key="3">
    <source>
        <dbReference type="PROSITE-ProRule" id="PRU00718"/>
    </source>
</evidence>
<evidence type="ECO:0000256" key="4">
    <source>
        <dbReference type="SAM" id="MobiDB-lite"/>
    </source>
</evidence>
<evidence type="ECO:0000269" key="5">
    <source>
    </source>
</evidence>
<evidence type="ECO:0000269" key="6">
    <source>
    </source>
</evidence>
<evidence type="ECO:0000269" key="7">
    <source>
    </source>
</evidence>
<evidence type="ECO:0000269" key="8">
    <source>
    </source>
</evidence>
<evidence type="ECO:0000269" key="9">
    <source>
    </source>
</evidence>
<evidence type="ECO:0000305" key="10"/>
<evidence type="ECO:0000305" key="11">
    <source>
    </source>
</evidence>
<evidence type="ECO:0000305" key="12">
    <source>
    </source>
</evidence>
<evidence type="ECO:0000305" key="13">
    <source>
    </source>
</evidence>
<evidence type="ECO:0000305" key="14">
    <source>
    </source>
</evidence>
<evidence type="ECO:0007829" key="15">
    <source>
        <dbReference type="PDB" id="4BBY"/>
    </source>
</evidence>
<evidence type="ECO:0007829" key="16">
    <source>
        <dbReference type="PDB" id="4BC9"/>
    </source>
</evidence>
<evidence type="ECO:0007829" key="17">
    <source>
        <dbReference type="PDB" id="4BCA"/>
    </source>
</evidence>
<evidence type="ECO:0007829" key="18">
    <source>
        <dbReference type="PDB" id="5ADZ"/>
    </source>
</evidence>
<evidence type="ECO:0007829" key="19">
    <source>
        <dbReference type="PDB" id="5AE1"/>
    </source>
</evidence>
<evidence type="ECO:0007829" key="20">
    <source>
        <dbReference type="PDB" id="5AE2"/>
    </source>
</evidence>
<gene>
    <name type="primary">AGPS</name>
</gene>
<reference key="1">
    <citation type="journal article" date="1997" name="J. Biol. Chem.">
        <title>Polymerase chain reaction-based cloning of alkyl-dihydroxyacetonephosphate synthase complementary DNA from guinea pig liver.</title>
        <authorList>
            <person name="de Vet E.C.J.M."/>
            <person name="Zomer A.W.M."/>
            <person name="Lahaut G.J.H.T.J."/>
            <person name="van den Bosch H."/>
        </authorList>
    </citation>
    <scope>NUCLEOTIDE SEQUENCE [MRNA]</scope>
    <scope>PROTEIN SEQUENCE OF 59-83; 92-114; 422-445 AND 515-539</scope>
    <source>
        <tissue>Liver</tissue>
    </source>
</reference>
<reference key="2">
    <citation type="journal article" date="2000" name="J. Biol. Chem.">
        <title>Alkyl-dihydroxyacetonephosphate synthase. Presence and role of flavin adenine dinucleotide.</title>
        <authorList>
            <person name="de Vet E.C.J.M."/>
            <person name="Hilkes Y.H.A."/>
            <person name="Fraaije M.W."/>
            <person name="van den Bosch H."/>
        </authorList>
    </citation>
    <scope>FUNCTION</scope>
    <scope>CATALYTIC ACTIVITY</scope>
    <scope>COFACTOR</scope>
    <scope>MUTAGENESIS OF HIS-300; SER-367; ARG-419; HIS-615; HIS-616 AND HIS-617</scope>
</reference>
<reference key="3">
    <citation type="journal article" date="1993" name="Biochim. Biophys. Acta">
        <title>Ether lipid synthesis: purification and identification of alkyl dihydroxyacetone phosphate synthase from guinea-pig liver.</title>
        <authorList>
            <person name="Zomer A.W."/>
            <person name="de Weerd W.F."/>
            <person name="Langeveld J."/>
            <person name="van den Bosch H."/>
        </authorList>
    </citation>
    <scope>FUNCTION</scope>
    <scope>CATALYTIC ACTIVITY</scope>
    <scope>BIOPHYSICOCHEMICAL PROPERTIES</scope>
    <scope>SUBCELLULAR LOCATION</scope>
</reference>
<reference key="4">
    <citation type="journal article" date="1999" name="Biochim. Biophys. Acta">
        <title>Characterization of recombinant guinea pig alkyl-dihydroxyacetonephosphate synthase expressed in Escherichia coli. Kinetics, chemical modification and mutagenesis.</title>
        <authorList>
            <person name="de Vet E.C."/>
            <person name="van den Bosch H."/>
        </authorList>
    </citation>
    <scope>FUNCTION</scope>
    <scope>CATALYTIC ACTIVITY</scope>
    <scope>MUTAGENESIS OF SER-367; ARG-419; CYS-576 AND HIS-617</scope>
    <scope>ACTIVITY REGULATION</scope>
    <scope>SUBCELLULAR LOCATION</scope>
</reference>
<reference key="5">
    <citation type="journal article" date="2012" name="Proc. Natl. Acad. Sci. U.S.A.">
        <title>Precursor of ether phospholipids is synthesized by a flavoenzyme through covalent catalysis.</title>
        <authorList>
            <person name="Nenci S."/>
            <person name="Piano V."/>
            <person name="Rosati S."/>
            <person name="Aliverti A."/>
            <person name="Pandini V."/>
            <person name="Fraaije M.W."/>
            <person name="Heck A.J."/>
            <person name="Edmondson D.E."/>
            <person name="Mattevi A."/>
        </authorList>
    </citation>
    <scope>X-RAY CRYSTALLOGRAPHY (1.9 ANGSTROMS) OF WILD-TYPE AND MUTANTS HIS-419 AND PHE-578 IN COMPLEX WITH FAD AND SUBSTRATE ANALOG</scope>
    <scope>FUNCTION</scope>
    <scope>CATALYTIC ACTIVITY</scope>
    <scope>SUBUNIT</scope>
    <scope>ACTIVE SITE</scope>
    <scope>COFACTOR</scope>
    <scope>MUTAGENESIS OF THR-309; ARG-419; LEU-469; ARG-515 AND TYR-578</scope>
</reference>
<protein>
    <recommendedName>
        <fullName>Alkyldihydroxyacetonephosphate synthase, peroxisomal</fullName>
        <shortName>Alkyl-DHAP synthase</shortName>
        <ecNumber evidence="5 6 7 9">2.5.1.26</ecNumber>
    </recommendedName>
    <alternativeName>
        <fullName>Alkylglycerone-phosphate synthase</fullName>
    </alternativeName>
</protein>
<sequence>MAEAAAAAAAAAAAGETSASSGSAAERDPDQDRAGRRLRVLSGHLLGRPQEALSTNECKARRAASAATAAPTATPAAPESGIIPKKRQELMKWNGWGYNDSKFFLNKKGQLELTGKRYPLSGVALPTFKDWIQNTFGINLDHKTTSKASLNPSDTPPSIVNEDFLHELKKTNISYSQEADDRVFRAHGHCLHEIFLLREGMFERIPDIVLWPTCHDDVVKIVNLACKYNLCIIPIGGGTSVSYGLMCPADETRTIISLDTSQMNRILWVDENNLTAHVEAGITGQELERQLKESGYCTGHEPDSLEFSTVGGWISTRASGMKKNIYGNIEDLVVHMKVVTPRGVIEKSCQGPRMSTGPDIHHFIMGSEGTLGVITEATIKIRPTPEYQKYGSVAFPNFEQGVACLREIAKQRCAPASIRLMDNQQFQFGHALKPQVSSIFTSFLDGLKKFYITKFKGFDPNQLSVATLLFEGDREKVLQHEKQVYDIAAKFGGLAAGEDNGQRGYLLTYVIAYMRDLGLEYYIIGESFETSAPWDRVVDLCRNVKERIRRECKEKGVQFPPLSTCRVTQTYDAGACIYFYFAFNYRGISDPLAVFEQTEAAAREEILANGGSLSHHHGVGKLRKQWLKESISDVGFGMLKSVKDYVDPTNIFGNRNLL</sequence>